<proteinExistence type="inferred from homology"/>
<reference key="1">
    <citation type="submission" date="2007-09" db="EMBL/GenBank/DDBJ databases">
        <title>Complete sequence of chromosome of Serratia proteamaculans 568.</title>
        <authorList>
            <consortium name="US DOE Joint Genome Institute"/>
            <person name="Copeland A."/>
            <person name="Lucas S."/>
            <person name="Lapidus A."/>
            <person name="Barry K."/>
            <person name="Glavina del Rio T."/>
            <person name="Dalin E."/>
            <person name="Tice H."/>
            <person name="Pitluck S."/>
            <person name="Chain P."/>
            <person name="Malfatti S."/>
            <person name="Shin M."/>
            <person name="Vergez L."/>
            <person name="Schmutz J."/>
            <person name="Larimer F."/>
            <person name="Land M."/>
            <person name="Hauser L."/>
            <person name="Kyrpides N."/>
            <person name="Kim E."/>
            <person name="Taghavi S."/>
            <person name="Newman L."/>
            <person name="Vangronsveld J."/>
            <person name="van der Lelie D."/>
            <person name="Richardson P."/>
        </authorList>
    </citation>
    <scope>NUCLEOTIDE SEQUENCE [LARGE SCALE GENOMIC DNA]</scope>
    <source>
        <strain>568</strain>
    </source>
</reference>
<sequence length="288" mass="31698">MIRQWPSPAKLNLFLYITGQREDGYHLLQTLFQFLDYGDTLTIDVRQDDAIHLLTPVAGVPDEQNLIVRAARLLQQHCDRHGLNTAPRGAEISIEKRLPMGGGLGGGSSNAATVLVALNDLWRCGLSDEQLAELGLALGADVPVFVRGHAAFAEGIGERLQPANPQEKWYLVAHPGVSIPTPVIFGDADLKRDTPVRPLNVLLQATYANDCEPIARKRFREVEQLVSWLLEYAPSRLTGTGACVFAEFDTETAARQVLNQAPEWIRGFVARGVNVSPLHRIRSGQIEP</sequence>
<accession>A8GDA0</accession>
<gene>
    <name evidence="1" type="primary">ispE</name>
    <name type="ordered locus">Spro_1987</name>
</gene>
<evidence type="ECO:0000255" key="1">
    <source>
        <dbReference type="HAMAP-Rule" id="MF_00061"/>
    </source>
</evidence>
<name>ISPE_SERP5</name>
<feature type="chain" id="PRO_0000335755" description="4-diphosphocytidyl-2-C-methyl-D-erythritol kinase">
    <location>
        <begin position="1"/>
        <end position="288"/>
    </location>
</feature>
<feature type="active site" evidence="1">
    <location>
        <position position="10"/>
    </location>
</feature>
<feature type="active site" evidence="1">
    <location>
        <position position="141"/>
    </location>
</feature>
<feature type="binding site" evidence="1">
    <location>
        <begin position="99"/>
        <end position="109"/>
    </location>
    <ligand>
        <name>ATP</name>
        <dbReference type="ChEBI" id="CHEBI:30616"/>
    </ligand>
</feature>
<organism>
    <name type="scientific">Serratia proteamaculans (strain 568)</name>
    <dbReference type="NCBI Taxonomy" id="399741"/>
    <lineage>
        <taxon>Bacteria</taxon>
        <taxon>Pseudomonadati</taxon>
        <taxon>Pseudomonadota</taxon>
        <taxon>Gammaproteobacteria</taxon>
        <taxon>Enterobacterales</taxon>
        <taxon>Yersiniaceae</taxon>
        <taxon>Serratia</taxon>
    </lineage>
</organism>
<dbReference type="EC" id="2.7.1.148" evidence="1"/>
<dbReference type="EMBL" id="CP000826">
    <property type="protein sequence ID" value="ABV41090.1"/>
    <property type="molecule type" value="Genomic_DNA"/>
</dbReference>
<dbReference type="SMR" id="A8GDA0"/>
<dbReference type="STRING" id="399741.Spro_1987"/>
<dbReference type="KEGG" id="spe:Spro_1987"/>
<dbReference type="eggNOG" id="COG1947">
    <property type="taxonomic scope" value="Bacteria"/>
</dbReference>
<dbReference type="HOGENOM" id="CLU_053057_3_0_6"/>
<dbReference type="OrthoDB" id="9809438at2"/>
<dbReference type="UniPathway" id="UPA00056">
    <property type="reaction ID" value="UER00094"/>
</dbReference>
<dbReference type="GO" id="GO:0050515">
    <property type="term" value="F:4-(cytidine 5'-diphospho)-2-C-methyl-D-erythritol kinase activity"/>
    <property type="evidence" value="ECO:0007669"/>
    <property type="project" value="UniProtKB-UniRule"/>
</dbReference>
<dbReference type="GO" id="GO:0005524">
    <property type="term" value="F:ATP binding"/>
    <property type="evidence" value="ECO:0007669"/>
    <property type="project" value="UniProtKB-UniRule"/>
</dbReference>
<dbReference type="GO" id="GO:0019288">
    <property type="term" value="P:isopentenyl diphosphate biosynthetic process, methylerythritol 4-phosphate pathway"/>
    <property type="evidence" value="ECO:0007669"/>
    <property type="project" value="UniProtKB-UniRule"/>
</dbReference>
<dbReference type="GO" id="GO:0016114">
    <property type="term" value="P:terpenoid biosynthetic process"/>
    <property type="evidence" value="ECO:0007669"/>
    <property type="project" value="InterPro"/>
</dbReference>
<dbReference type="FunFam" id="3.30.230.10:FF:000022">
    <property type="entry name" value="4-diphosphocytidyl-2-C-methyl-D-erythritol kinase"/>
    <property type="match status" value="1"/>
</dbReference>
<dbReference type="FunFam" id="3.30.70.890:FF:000004">
    <property type="entry name" value="4-diphosphocytidyl-2-C-methyl-D-erythritol kinase"/>
    <property type="match status" value="1"/>
</dbReference>
<dbReference type="Gene3D" id="3.30.230.10">
    <property type="match status" value="1"/>
</dbReference>
<dbReference type="Gene3D" id="3.30.70.890">
    <property type="entry name" value="GHMP kinase, C-terminal domain"/>
    <property type="match status" value="1"/>
</dbReference>
<dbReference type="HAMAP" id="MF_00061">
    <property type="entry name" value="IspE"/>
    <property type="match status" value="1"/>
</dbReference>
<dbReference type="InterPro" id="IPR013750">
    <property type="entry name" value="GHMP_kinase_C_dom"/>
</dbReference>
<dbReference type="InterPro" id="IPR036554">
    <property type="entry name" value="GHMP_kinase_C_sf"/>
</dbReference>
<dbReference type="InterPro" id="IPR006204">
    <property type="entry name" value="GHMP_kinase_N_dom"/>
</dbReference>
<dbReference type="InterPro" id="IPR004424">
    <property type="entry name" value="IspE"/>
</dbReference>
<dbReference type="InterPro" id="IPR020568">
    <property type="entry name" value="Ribosomal_Su5_D2-typ_SF"/>
</dbReference>
<dbReference type="InterPro" id="IPR014721">
    <property type="entry name" value="Ribsml_uS5_D2-typ_fold_subgr"/>
</dbReference>
<dbReference type="NCBIfam" id="TIGR00154">
    <property type="entry name" value="ispE"/>
    <property type="match status" value="1"/>
</dbReference>
<dbReference type="PANTHER" id="PTHR43527">
    <property type="entry name" value="4-DIPHOSPHOCYTIDYL-2-C-METHYL-D-ERYTHRITOL KINASE, CHLOROPLASTIC"/>
    <property type="match status" value="1"/>
</dbReference>
<dbReference type="PANTHER" id="PTHR43527:SF2">
    <property type="entry name" value="4-DIPHOSPHOCYTIDYL-2-C-METHYL-D-ERYTHRITOL KINASE, CHLOROPLASTIC"/>
    <property type="match status" value="1"/>
</dbReference>
<dbReference type="Pfam" id="PF08544">
    <property type="entry name" value="GHMP_kinases_C"/>
    <property type="match status" value="1"/>
</dbReference>
<dbReference type="Pfam" id="PF00288">
    <property type="entry name" value="GHMP_kinases_N"/>
    <property type="match status" value="1"/>
</dbReference>
<dbReference type="PIRSF" id="PIRSF010376">
    <property type="entry name" value="IspE"/>
    <property type="match status" value="1"/>
</dbReference>
<dbReference type="SUPFAM" id="SSF55060">
    <property type="entry name" value="GHMP Kinase, C-terminal domain"/>
    <property type="match status" value="1"/>
</dbReference>
<dbReference type="SUPFAM" id="SSF54211">
    <property type="entry name" value="Ribosomal protein S5 domain 2-like"/>
    <property type="match status" value="1"/>
</dbReference>
<comment type="function">
    <text evidence="1">Catalyzes the phosphorylation of the position 2 hydroxy group of 4-diphosphocytidyl-2C-methyl-D-erythritol.</text>
</comment>
<comment type="catalytic activity">
    <reaction evidence="1">
        <text>4-CDP-2-C-methyl-D-erythritol + ATP = 4-CDP-2-C-methyl-D-erythritol 2-phosphate + ADP + H(+)</text>
        <dbReference type="Rhea" id="RHEA:18437"/>
        <dbReference type="ChEBI" id="CHEBI:15378"/>
        <dbReference type="ChEBI" id="CHEBI:30616"/>
        <dbReference type="ChEBI" id="CHEBI:57823"/>
        <dbReference type="ChEBI" id="CHEBI:57919"/>
        <dbReference type="ChEBI" id="CHEBI:456216"/>
        <dbReference type="EC" id="2.7.1.148"/>
    </reaction>
</comment>
<comment type="pathway">
    <text evidence="1">Isoprenoid biosynthesis; isopentenyl diphosphate biosynthesis via DXP pathway; isopentenyl diphosphate from 1-deoxy-D-xylulose 5-phosphate: step 3/6.</text>
</comment>
<comment type="subunit">
    <text evidence="1">Homodimer.</text>
</comment>
<comment type="similarity">
    <text evidence="1">Belongs to the GHMP kinase family. IspE subfamily.</text>
</comment>
<keyword id="KW-0067">ATP-binding</keyword>
<keyword id="KW-0414">Isoprene biosynthesis</keyword>
<keyword id="KW-0418">Kinase</keyword>
<keyword id="KW-0547">Nucleotide-binding</keyword>
<keyword id="KW-0808">Transferase</keyword>
<protein>
    <recommendedName>
        <fullName evidence="1">4-diphosphocytidyl-2-C-methyl-D-erythritol kinase</fullName>
        <shortName evidence="1">CMK</shortName>
        <ecNumber evidence="1">2.7.1.148</ecNumber>
    </recommendedName>
    <alternativeName>
        <fullName evidence="1">4-(cytidine-5'-diphospho)-2-C-methyl-D-erythritol kinase</fullName>
    </alternativeName>
</protein>